<keyword id="KW-0030">Aminoacyl-tRNA synthetase</keyword>
<keyword id="KW-0067">ATP-binding</keyword>
<keyword id="KW-0963">Cytoplasm</keyword>
<keyword id="KW-0436">Ligase</keyword>
<keyword id="KW-0547">Nucleotide-binding</keyword>
<keyword id="KW-0648">Protein biosynthesis</keyword>
<keyword id="KW-1185">Reference proteome</keyword>
<proteinExistence type="inferred from homology"/>
<organism>
    <name type="scientific">Brucella abortus (strain 2308)</name>
    <dbReference type="NCBI Taxonomy" id="359391"/>
    <lineage>
        <taxon>Bacteria</taxon>
        <taxon>Pseudomonadati</taxon>
        <taxon>Pseudomonadota</taxon>
        <taxon>Alphaproteobacteria</taxon>
        <taxon>Hyphomicrobiales</taxon>
        <taxon>Brucellaceae</taxon>
        <taxon>Brucella/Ochrobactrum group</taxon>
        <taxon>Brucella</taxon>
    </lineage>
</organism>
<sequence length="473" mass="52031">MSKPVITRFAPSPTGYLHIGGARTALFNWLYAKHCGGKMLLRIEDTDRERSTEAATAAILDGLTWLGLDWDGEAISQFERAPRHREVAEELVANGKAYYCYASPEELEEMREKARAEGRPPRYDGRWRDRDPSEAPAGVKPVIRIKAPRDGETVVHDAVQGDVRFPNKDLDDFIILRSDGTPTYMHAVVVDDHDMGVTHIIRGDDHLTNAARQTIIYNAMGWDVPQMSHIPLIHGADGAKLSKRHGALGVDAYRAIGYLPAALRNYLVRLGWSHGDDEIMSTEQMIEWFDVKDINKGAARFDFQKLEAINGLYMRSSDDQALFDALVAVLPEIEGGKELAEALDDKGRAQLLLAMPGLKERAKTLVELADGAKFIFASRPLALDEKAASLLNDEGRAVLKPVYPVLEAVGEWTAESLDAAIRAHAEAEGLKLGKIAQPLRAALTGRATSPGVFDVLVVLGREESLARIGDQIG</sequence>
<accession>Q2YRQ9</accession>
<gene>
    <name evidence="1" type="primary">gltX2</name>
    <name type="ordered locus">BAB1_1169</name>
</gene>
<dbReference type="EC" id="6.1.1.17" evidence="1"/>
<dbReference type="EMBL" id="AM040264">
    <property type="protein sequence ID" value="CAJ11125.1"/>
    <property type="molecule type" value="Genomic_DNA"/>
</dbReference>
<dbReference type="SMR" id="Q2YRQ9"/>
<dbReference type="STRING" id="359391.BAB1_1169"/>
<dbReference type="KEGG" id="bmf:BAB1_1169"/>
<dbReference type="PATRIC" id="fig|359391.11.peg.68"/>
<dbReference type="HOGENOM" id="CLU_015768_6_3_5"/>
<dbReference type="PhylomeDB" id="Q2YRQ9"/>
<dbReference type="Proteomes" id="UP000002719">
    <property type="component" value="Chromosome I"/>
</dbReference>
<dbReference type="GO" id="GO:0005829">
    <property type="term" value="C:cytosol"/>
    <property type="evidence" value="ECO:0007669"/>
    <property type="project" value="TreeGrafter"/>
</dbReference>
<dbReference type="GO" id="GO:0005524">
    <property type="term" value="F:ATP binding"/>
    <property type="evidence" value="ECO:0007669"/>
    <property type="project" value="UniProtKB-UniRule"/>
</dbReference>
<dbReference type="GO" id="GO:0004818">
    <property type="term" value="F:glutamate-tRNA ligase activity"/>
    <property type="evidence" value="ECO:0007669"/>
    <property type="project" value="UniProtKB-UniRule"/>
</dbReference>
<dbReference type="GO" id="GO:0000049">
    <property type="term" value="F:tRNA binding"/>
    <property type="evidence" value="ECO:0007669"/>
    <property type="project" value="InterPro"/>
</dbReference>
<dbReference type="GO" id="GO:0008270">
    <property type="term" value="F:zinc ion binding"/>
    <property type="evidence" value="ECO:0007669"/>
    <property type="project" value="InterPro"/>
</dbReference>
<dbReference type="GO" id="GO:0006424">
    <property type="term" value="P:glutamyl-tRNA aminoacylation"/>
    <property type="evidence" value="ECO:0007669"/>
    <property type="project" value="UniProtKB-UniRule"/>
</dbReference>
<dbReference type="CDD" id="cd00808">
    <property type="entry name" value="GluRS_core"/>
    <property type="match status" value="1"/>
</dbReference>
<dbReference type="FunFam" id="3.40.50.620:FF:000007">
    <property type="entry name" value="Glutamate--tRNA ligase"/>
    <property type="match status" value="1"/>
</dbReference>
<dbReference type="Gene3D" id="1.10.10.350">
    <property type="match status" value="1"/>
</dbReference>
<dbReference type="Gene3D" id="3.40.50.620">
    <property type="entry name" value="HUPs"/>
    <property type="match status" value="1"/>
</dbReference>
<dbReference type="HAMAP" id="MF_00022">
    <property type="entry name" value="Glu_tRNA_synth_type1"/>
    <property type="match status" value="1"/>
</dbReference>
<dbReference type="InterPro" id="IPR045462">
    <property type="entry name" value="aa-tRNA-synth_I_cd-bd"/>
</dbReference>
<dbReference type="InterPro" id="IPR020751">
    <property type="entry name" value="aa-tRNA-synth_I_codon-bd_sub2"/>
</dbReference>
<dbReference type="InterPro" id="IPR001412">
    <property type="entry name" value="aa-tRNA-synth_I_CS"/>
</dbReference>
<dbReference type="InterPro" id="IPR008925">
    <property type="entry name" value="aa_tRNA-synth_I_cd-bd_sf"/>
</dbReference>
<dbReference type="InterPro" id="IPR004527">
    <property type="entry name" value="Glu-tRNA-ligase_bac/mito"/>
</dbReference>
<dbReference type="InterPro" id="IPR000924">
    <property type="entry name" value="Glu/Gln-tRNA-synth"/>
</dbReference>
<dbReference type="InterPro" id="IPR020058">
    <property type="entry name" value="Glu/Gln-tRNA-synth_Ib_cat-dom"/>
</dbReference>
<dbReference type="InterPro" id="IPR049940">
    <property type="entry name" value="GluQ/Sye"/>
</dbReference>
<dbReference type="InterPro" id="IPR033910">
    <property type="entry name" value="GluRS_core"/>
</dbReference>
<dbReference type="InterPro" id="IPR014729">
    <property type="entry name" value="Rossmann-like_a/b/a_fold"/>
</dbReference>
<dbReference type="NCBIfam" id="TIGR00464">
    <property type="entry name" value="gltX_bact"/>
    <property type="match status" value="1"/>
</dbReference>
<dbReference type="PANTHER" id="PTHR43311">
    <property type="entry name" value="GLUTAMATE--TRNA LIGASE"/>
    <property type="match status" value="1"/>
</dbReference>
<dbReference type="PANTHER" id="PTHR43311:SF2">
    <property type="entry name" value="GLUTAMATE--TRNA LIGASE, MITOCHONDRIAL-RELATED"/>
    <property type="match status" value="1"/>
</dbReference>
<dbReference type="Pfam" id="PF19269">
    <property type="entry name" value="Anticodon_2"/>
    <property type="match status" value="1"/>
</dbReference>
<dbReference type="Pfam" id="PF00749">
    <property type="entry name" value="tRNA-synt_1c"/>
    <property type="match status" value="1"/>
</dbReference>
<dbReference type="PRINTS" id="PR00987">
    <property type="entry name" value="TRNASYNTHGLU"/>
</dbReference>
<dbReference type="SUPFAM" id="SSF48163">
    <property type="entry name" value="An anticodon-binding domain of class I aminoacyl-tRNA synthetases"/>
    <property type="match status" value="1"/>
</dbReference>
<dbReference type="SUPFAM" id="SSF52374">
    <property type="entry name" value="Nucleotidylyl transferase"/>
    <property type="match status" value="1"/>
</dbReference>
<dbReference type="PROSITE" id="PS00178">
    <property type="entry name" value="AA_TRNA_LIGASE_I"/>
    <property type="match status" value="1"/>
</dbReference>
<name>SYE2_BRUA2</name>
<feature type="chain" id="PRO_0000237346" description="Glutamate--tRNA ligase 2">
    <location>
        <begin position="1"/>
        <end position="473"/>
    </location>
</feature>
<feature type="region of interest" description="Disordered" evidence="2">
    <location>
        <begin position="113"/>
        <end position="136"/>
    </location>
</feature>
<feature type="short sequence motif" description="'HIGH' region" evidence="1">
    <location>
        <begin position="11"/>
        <end position="21"/>
    </location>
</feature>
<feature type="short sequence motif" description="'KMSKS' region" evidence="1">
    <location>
        <begin position="240"/>
        <end position="244"/>
    </location>
</feature>
<feature type="compositionally biased region" description="Basic and acidic residues" evidence="2">
    <location>
        <begin position="113"/>
        <end position="133"/>
    </location>
</feature>
<feature type="binding site" evidence="1">
    <location>
        <position position="243"/>
    </location>
    <ligand>
        <name>ATP</name>
        <dbReference type="ChEBI" id="CHEBI:30616"/>
    </ligand>
</feature>
<comment type="function">
    <text evidence="1">Catalyzes the attachment of glutamate to tRNA(Glu) in a two-step reaction: glutamate is first activated by ATP to form Glu-AMP and then transferred to the acceptor end of tRNA(Glu).</text>
</comment>
<comment type="catalytic activity">
    <reaction evidence="1">
        <text>tRNA(Glu) + L-glutamate + ATP = L-glutamyl-tRNA(Glu) + AMP + diphosphate</text>
        <dbReference type="Rhea" id="RHEA:23540"/>
        <dbReference type="Rhea" id="RHEA-COMP:9663"/>
        <dbReference type="Rhea" id="RHEA-COMP:9680"/>
        <dbReference type="ChEBI" id="CHEBI:29985"/>
        <dbReference type="ChEBI" id="CHEBI:30616"/>
        <dbReference type="ChEBI" id="CHEBI:33019"/>
        <dbReference type="ChEBI" id="CHEBI:78442"/>
        <dbReference type="ChEBI" id="CHEBI:78520"/>
        <dbReference type="ChEBI" id="CHEBI:456215"/>
        <dbReference type="EC" id="6.1.1.17"/>
    </reaction>
</comment>
<comment type="subunit">
    <text evidence="1">Monomer.</text>
</comment>
<comment type="subcellular location">
    <subcellularLocation>
        <location evidence="1">Cytoplasm</location>
    </subcellularLocation>
</comment>
<comment type="similarity">
    <text evidence="1">Belongs to the class-I aminoacyl-tRNA synthetase family. Glutamate--tRNA ligase type 1 subfamily.</text>
</comment>
<evidence type="ECO:0000255" key="1">
    <source>
        <dbReference type="HAMAP-Rule" id="MF_00022"/>
    </source>
</evidence>
<evidence type="ECO:0000256" key="2">
    <source>
        <dbReference type="SAM" id="MobiDB-lite"/>
    </source>
</evidence>
<protein>
    <recommendedName>
        <fullName evidence="1">Glutamate--tRNA ligase 2</fullName>
        <ecNumber evidence="1">6.1.1.17</ecNumber>
    </recommendedName>
    <alternativeName>
        <fullName evidence="1">Glutamyl-tRNA synthetase 2</fullName>
        <shortName evidence="1">GluRS 2</shortName>
    </alternativeName>
</protein>
<reference key="1">
    <citation type="journal article" date="2005" name="Infect. Immun.">
        <title>Whole-genome analyses of speciation events in pathogenic Brucellae.</title>
        <authorList>
            <person name="Chain P.S."/>
            <person name="Comerci D.J."/>
            <person name="Tolmasky M.E."/>
            <person name="Larimer F.W."/>
            <person name="Malfatti S.A."/>
            <person name="Vergez L.M."/>
            <person name="Aguero F."/>
            <person name="Land M.L."/>
            <person name="Ugalde R.A."/>
            <person name="Garcia E."/>
        </authorList>
    </citation>
    <scope>NUCLEOTIDE SEQUENCE [LARGE SCALE GENOMIC DNA]</scope>
    <source>
        <strain>2308</strain>
    </source>
</reference>